<sequence>MPSFDIVSKVDMQEIDNAVNQALKEILQRYDFKGTHNEIKLENEAIVLLGADDYKLDAVIDVLKGKLAKRNVSPKCLDFGKKEPASGTAVRQRVAIVQGISKEKGKEICKLIKNSKLKVQAQIMDDQVRVSGKKIDDLQSVIQLLKGQDVGIELQFINMRS</sequence>
<proteinExistence type="inferred from homology"/>
<reference key="1">
    <citation type="submission" date="2005-10" db="EMBL/GenBank/DDBJ databases">
        <title>Complete sequence of Pelobacter carbinolicus DSM 2380.</title>
        <authorList>
            <person name="Copeland A."/>
            <person name="Lucas S."/>
            <person name="Lapidus A."/>
            <person name="Barry K."/>
            <person name="Detter J.C."/>
            <person name="Glavina T."/>
            <person name="Hammon N."/>
            <person name="Israni S."/>
            <person name="Pitluck S."/>
            <person name="Chertkov O."/>
            <person name="Schmutz J."/>
            <person name="Larimer F."/>
            <person name="Land M."/>
            <person name="Kyrpides N."/>
            <person name="Ivanova N."/>
            <person name="Richardson P."/>
        </authorList>
    </citation>
    <scope>NUCLEOTIDE SEQUENCE [LARGE SCALE GENOMIC DNA]</scope>
    <source>
        <strain>DSM 2380 / NBRC 103641 / GraBd1</strain>
    </source>
</reference>
<feature type="chain" id="PRO_0000261956" description="Nucleotide-binding protein Pcar_0033">
    <location>
        <begin position="1"/>
        <end position="161"/>
    </location>
</feature>
<accession>Q3A8J6</accession>
<dbReference type="EMBL" id="CP000142">
    <property type="protein sequence ID" value="ABA87296.1"/>
    <property type="molecule type" value="Genomic_DNA"/>
</dbReference>
<dbReference type="RefSeq" id="WP_011339680.1">
    <property type="nucleotide sequence ID" value="NC_007498.2"/>
</dbReference>
<dbReference type="SMR" id="Q3A8J6"/>
<dbReference type="STRING" id="338963.Pcar_0033"/>
<dbReference type="KEGG" id="pca:Pcar_0033"/>
<dbReference type="eggNOG" id="COG1666">
    <property type="taxonomic scope" value="Bacteria"/>
</dbReference>
<dbReference type="HOGENOM" id="CLU_099839_1_0_7"/>
<dbReference type="OrthoDB" id="9801447at2"/>
<dbReference type="Proteomes" id="UP000002534">
    <property type="component" value="Chromosome"/>
</dbReference>
<dbReference type="GO" id="GO:0005829">
    <property type="term" value="C:cytosol"/>
    <property type="evidence" value="ECO:0007669"/>
    <property type="project" value="TreeGrafter"/>
</dbReference>
<dbReference type="GO" id="GO:0000166">
    <property type="term" value="F:nucleotide binding"/>
    <property type="evidence" value="ECO:0007669"/>
    <property type="project" value="TreeGrafter"/>
</dbReference>
<dbReference type="CDD" id="cd11740">
    <property type="entry name" value="YajQ_like"/>
    <property type="match status" value="1"/>
</dbReference>
<dbReference type="Gene3D" id="3.30.70.860">
    <property type="match status" value="1"/>
</dbReference>
<dbReference type="Gene3D" id="3.30.70.990">
    <property type="entry name" value="YajQ-like, domain 2"/>
    <property type="match status" value="1"/>
</dbReference>
<dbReference type="HAMAP" id="MF_00632">
    <property type="entry name" value="YajQ"/>
    <property type="match status" value="1"/>
</dbReference>
<dbReference type="InterPro" id="IPR007551">
    <property type="entry name" value="DUF520"/>
</dbReference>
<dbReference type="InterPro" id="IPR035571">
    <property type="entry name" value="UPF0234-like_C"/>
</dbReference>
<dbReference type="InterPro" id="IPR035570">
    <property type="entry name" value="UPF0234_N"/>
</dbReference>
<dbReference type="InterPro" id="IPR036183">
    <property type="entry name" value="YajQ-like_sf"/>
</dbReference>
<dbReference type="NCBIfam" id="NF003819">
    <property type="entry name" value="PRK05412.1"/>
    <property type="match status" value="1"/>
</dbReference>
<dbReference type="PANTHER" id="PTHR30476">
    <property type="entry name" value="UPF0234 PROTEIN YAJQ"/>
    <property type="match status" value="1"/>
</dbReference>
<dbReference type="PANTHER" id="PTHR30476:SF0">
    <property type="entry name" value="UPF0234 PROTEIN YAJQ"/>
    <property type="match status" value="1"/>
</dbReference>
<dbReference type="Pfam" id="PF04461">
    <property type="entry name" value="DUF520"/>
    <property type="match status" value="1"/>
</dbReference>
<dbReference type="SUPFAM" id="SSF89963">
    <property type="entry name" value="YajQ-like"/>
    <property type="match status" value="2"/>
</dbReference>
<organism>
    <name type="scientific">Syntrophotalea carbinolica (strain DSM 2380 / NBRC 103641 / GraBd1)</name>
    <name type="common">Pelobacter carbinolicus</name>
    <dbReference type="NCBI Taxonomy" id="338963"/>
    <lineage>
        <taxon>Bacteria</taxon>
        <taxon>Pseudomonadati</taxon>
        <taxon>Thermodesulfobacteriota</taxon>
        <taxon>Desulfuromonadia</taxon>
        <taxon>Desulfuromonadales</taxon>
        <taxon>Syntrophotaleaceae</taxon>
        <taxon>Syntrophotalea</taxon>
    </lineage>
</organism>
<comment type="function">
    <text evidence="1">Nucleotide-binding protein.</text>
</comment>
<comment type="similarity">
    <text evidence="1">Belongs to the YajQ family.</text>
</comment>
<protein>
    <recommendedName>
        <fullName evidence="1">Nucleotide-binding protein Pcar_0033</fullName>
    </recommendedName>
</protein>
<keyword id="KW-0547">Nucleotide-binding</keyword>
<keyword id="KW-1185">Reference proteome</keyword>
<evidence type="ECO:0000255" key="1">
    <source>
        <dbReference type="HAMAP-Rule" id="MF_00632"/>
    </source>
</evidence>
<name>Y033_SYNC1</name>
<gene>
    <name type="ordered locus">Pcar_0033</name>
</gene>